<reference key="1">
    <citation type="submission" date="2006-12" db="EMBL/GenBank/DDBJ databases">
        <title>Complete sequence of chromosome 1 of Verminephrobacter eiseniae EF01-2.</title>
        <authorList>
            <person name="Copeland A."/>
            <person name="Lucas S."/>
            <person name="Lapidus A."/>
            <person name="Barry K."/>
            <person name="Detter J.C."/>
            <person name="Glavina del Rio T."/>
            <person name="Dalin E."/>
            <person name="Tice H."/>
            <person name="Pitluck S."/>
            <person name="Chertkov O."/>
            <person name="Brettin T."/>
            <person name="Bruce D."/>
            <person name="Han C."/>
            <person name="Tapia R."/>
            <person name="Gilna P."/>
            <person name="Schmutz J."/>
            <person name="Larimer F."/>
            <person name="Land M."/>
            <person name="Hauser L."/>
            <person name="Kyrpides N."/>
            <person name="Kim E."/>
            <person name="Stahl D."/>
            <person name="Richardson P."/>
        </authorList>
    </citation>
    <scope>NUCLEOTIDE SEQUENCE [LARGE SCALE GENOMIC DNA]</scope>
    <source>
        <strain>EF01-2</strain>
    </source>
</reference>
<comment type="function">
    <text evidence="1">Nucleotidase that shows phosphatase activity on nucleoside 5'-monophosphates.</text>
</comment>
<comment type="catalytic activity">
    <reaction evidence="1">
        <text>a ribonucleoside 5'-phosphate + H2O = a ribonucleoside + phosphate</text>
        <dbReference type="Rhea" id="RHEA:12484"/>
        <dbReference type="ChEBI" id="CHEBI:15377"/>
        <dbReference type="ChEBI" id="CHEBI:18254"/>
        <dbReference type="ChEBI" id="CHEBI:43474"/>
        <dbReference type="ChEBI" id="CHEBI:58043"/>
        <dbReference type="EC" id="3.1.3.5"/>
    </reaction>
</comment>
<comment type="cofactor">
    <cofactor evidence="1">
        <name>a divalent metal cation</name>
        <dbReference type="ChEBI" id="CHEBI:60240"/>
    </cofactor>
    <text evidence="1">Binds 1 divalent metal cation per subunit.</text>
</comment>
<comment type="subcellular location">
    <subcellularLocation>
        <location evidence="1">Cytoplasm</location>
    </subcellularLocation>
</comment>
<comment type="similarity">
    <text evidence="1">Belongs to the SurE nucleotidase family.</text>
</comment>
<evidence type="ECO:0000255" key="1">
    <source>
        <dbReference type="HAMAP-Rule" id="MF_00060"/>
    </source>
</evidence>
<dbReference type="EC" id="3.1.3.5" evidence="1"/>
<dbReference type="EMBL" id="CP000542">
    <property type="protein sequence ID" value="ABM55883.1"/>
    <property type="molecule type" value="Genomic_DNA"/>
</dbReference>
<dbReference type="RefSeq" id="WP_011807902.1">
    <property type="nucleotide sequence ID" value="NC_008786.1"/>
</dbReference>
<dbReference type="SMR" id="A1WE26"/>
<dbReference type="STRING" id="391735.Veis_0090"/>
<dbReference type="GeneID" id="76458849"/>
<dbReference type="KEGG" id="vei:Veis_0090"/>
<dbReference type="eggNOG" id="COG0496">
    <property type="taxonomic scope" value="Bacteria"/>
</dbReference>
<dbReference type="HOGENOM" id="CLU_045192_1_2_4"/>
<dbReference type="OrthoDB" id="9780815at2"/>
<dbReference type="Proteomes" id="UP000000374">
    <property type="component" value="Chromosome"/>
</dbReference>
<dbReference type="GO" id="GO:0005737">
    <property type="term" value="C:cytoplasm"/>
    <property type="evidence" value="ECO:0007669"/>
    <property type="project" value="UniProtKB-SubCell"/>
</dbReference>
<dbReference type="GO" id="GO:0008254">
    <property type="term" value="F:3'-nucleotidase activity"/>
    <property type="evidence" value="ECO:0007669"/>
    <property type="project" value="TreeGrafter"/>
</dbReference>
<dbReference type="GO" id="GO:0008253">
    <property type="term" value="F:5'-nucleotidase activity"/>
    <property type="evidence" value="ECO:0007669"/>
    <property type="project" value="UniProtKB-UniRule"/>
</dbReference>
<dbReference type="GO" id="GO:0004309">
    <property type="term" value="F:exopolyphosphatase activity"/>
    <property type="evidence" value="ECO:0007669"/>
    <property type="project" value="TreeGrafter"/>
</dbReference>
<dbReference type="GO" id="GO:0046872">
    <property type="term" value="F:metal ion binding"/>
    <property type="evidence" value="ECO:0007669"/>
    <property type="project" value="UniProtKB-UniRule"/>
</dbReference>
<dbReference type="GO" id="GO:0000166">
    <property type="term" value="F:nucleotide binding"/>
    <property type="evidence" value="ECO:0007669"/>
    <property type="project" value="UniProtKB-KW"/>
</dbReference>
<dbReference type="FunFam" id="3.40.1210.10:FF:000001">
    <property type="entry name" value="5'/3'-nucleotidase SurE"/>
    <property type="match status" value="1"/>
</dbReference>
<dbReference type="Gene3D" id="3.40.1210.10">
    <property type="entry name" value="Survival protein SurE-like phosphatase/nucleotidase"/>
    <property type="match status" value="1"/>
</dbReference>
<dbReference type="HAMAP" id="MF_00060">
    <property type="entry name" value="SurE"/>
    <property type="match status" value="1"/>
</dbReference>
<dbReference type="InterPro" id="IPR030048">
    <property type="entry name" value="SurE"/>
</dbReference>
<dbReference type="InterPro" id="IPR002828">
    <property type="entry name" value="SurE-like_Pase/nucleotidase"/>
</dbReference>
<dbReference type="InterPro" id="IPR036523">
    <property type="entry name" value="SurE-like_sf"/>
</dbReference>
<dbReference type="NCBIfam" id="NF001489">
    <property type="entry name" value="PRK00346.1-3"/>
    <property type="match status" value="1"/>
</dbReference>
<dbReference type="NCBIfam" id="NF001490">
    <property type="entry name" value="PRK00346.1-4"/>
    <property type="match status" value="1"/>
</dbReference>
<dbReference type="NCBIfam" id="TIGR00087">
    <property type="entry name" value="surE"/>
    <property type="match status" value="1"/>
</dbReference>
<dbReference type="PANTHER" id="PTHR30457">
    <property type="entry name" value="5'-NUCLEOTIDASE SURE"/>
    <property type="match status" value="1"/>
</dbReference>
<dbReference type="PANTHER" id="PTHR30457:SF12">
    <property type="entry name" value="5'_3'-NUCLEOTIDASE SURE"/>
    <property type="match status" value="1"/>
</dbReference>
<dbReference type="Pfam" id="PF01975">
    <property type="entry name" value="SurE"/>
    <property type="match status" value="1"/>
</dbReference>
<dbReference type="SUPFAM" id="SSF64167">
    <property type="entry name" value="SurE-like"/>
    <property type="match status" value="1"/>
</dbReference>
<keyword id="KW-0963">Cytoplasm</keyword>
<keyword id="KW-0378">Hydrolase</keyword>
<keyword id="KW-0479">Metal-binding</keyword>
<keyword id="KW-0547">Nucleotide-binding</keyword>
<keyword id="KW-1185">Reference proteome</keyword>
<protein>
    <recommendedName>
        <fullName evidence="1">5'-nucleotidase SurE</fullName>
        <ecNumber evidence="1">3.1.3.5</ecNumber>
    </recommendedName>
    <alternativeName>
        <fullName evidence="1">Nucleoside 5'-monophosphate phosphohydrolase</fullName>
    </alternativeName>
</protein>
<feature type="chain" id="PRO_1000007799" description="5'-nucleotidase SurE">
    <location>
        <begin position="1"/>
        <end position="259"/>
    </location>
</feature>
<feature type="binding site" evidence="1">
    <location>
        <position position="8"/>
    </location>
    <ligand>
        <name>a divalent metal cation</name>
        <dbReference type="ChEBI" id="CHEBI:60240"/>
    </ligand>
</feature>
<feature type="binding site" evidence="1">
    <location>
        <position position="9"/>
    </location>
    <ligand>
        <name>a divalent metal cation</name>
        <dbReference type="ChEBI" id="CHEBI:60240"/>
    </ligand>
</feature>
<feature type="binding site" evidence="1">
    <location>
        <position position="41"/>
    </location>
    <ligand>
        <name>a divalent metal cation</name>
        <dbReference type="ChEBI" id="CHEBI:60240"/>
    </ligand>
</feature>
<feature type="binding site" evidence="1">
    <location>
        <position position="93"/>
    </location>
    <ligand>
        <name>a divalent metal cation</name>
        <dbReference type="ChEBI" id="CHEBI:60240"/>
    </ligand>
</feature>
<gene>
    <name evidence="1" type="primary">surE</name>
    <name type="ordered locus">Veis_0090</name>
</gene>
<name>SURE_VEREI</name>
<sequence>MKILISNDDGYQAPGIVALHDALKTLEGVTVQVVAPEHNNSAKSNALTLHSPLYVHQAASGFRYVNGTPADCVHIALTGLLGYRPDLVVSGINNGANMGDDTIYSGTVGAAMEGYLFGVPAIAFSQVDKGWGELEAAAAKAREIVAQLRAQNLVDPQAPWLLNVNIPNMPLTALRPIALCRLGRRHAAERVIVQQSPRGEAMYWIGGAGPAKDDAQGTDFYATAHGHVSITPLKVDLTDHDSLADWAQTAMRLAPGACI</sequence>
<organism>
    <name type="scientific">Verminephrobacter eiseniae (strain EF01-2)</name>
    <dbReference type="NCBI Taxonomy" id="391735"/>
    <lineage>
        <taxon>Bacteria</taxon>
        <taxon>Pseudomonadati</taxon>
        <taxon>Pseudomonadota</taxon>
        <taxon>Betaproteobacteria</taxon>
        <taxon>Burkholderiales</taxon>
        <taxon>Comamonadaceae</taxon>
        <taxon>Verminephrobacter</taxon>
    </lineage>
</organism>
<proteinExistence type="inferred from homology"/>
<accession>A1WE26</accession>